<reference key="1">
    <citation type="submission" date="2006-12" db="EMBL/GenBank/DDBJ databases">
        <title>Complete sequence of chromosome of Mycobacterium sp. KMS.</title>
        <authorList>
            <consortium name="US DOE Joint Genome Institute"/>
            <person name="Copeland A."/>
            <person name="Lucas S."/>
            <person name="Lapidus A."/>
            <person name="Barry K."/>
            <person name="Detter J.C."/>
            <person name="Glavina del Rio T."/>
            <person name="Hammon N."/>
            <person name="Israni S."/>
            <person name="Dalin E."/>
            <person name="Tice H."/>
            <person name="Pitluck S."/>
            <person name="Kiss H."/>
            <person name="Brettin T."/>
            <person name="Bruce D."/>
            <person name="Han C."/>
            <person name="Tapia R."/>
            <person name="Gilna P."/>
            <person name="Schmutz J."/>
            <person name="Larimer F."/>
            <person name="Land M."/>
            <person name="Hauser L."/>
            <person name="Kyrpides N."/>
            <person name="Mikhailova N."/>
            <person name="Miller C.D."/>
            <person name="Richardson P."/>
        </authorList>
    </citation>
    <scope>NUCLEOTIDE SEQUENCE [LARGE SCALE GENOMIC DNA]</scope>
    <source>
        <strain>KMS</strain>
    </source>
</reference>
<gene>
    <name evidence="1" type="primary">xerC</name>
    <name type="ordered locus">Mkms_2036</name>
</gene>
<protein>
    <recommendedName>
        <fullName evidence="1">Tyrosine recombinase XerC</fullName>
    </recommendedName>
</protein>
<feature type="chain" id="PRO_1000070015" description="Tyrosine recombinase XerC">
    <location>
        <begin position="1"/>
        <end position="300"/>
    </location>
</feature>
<feature type="domain" description="Core-binding (CB)" evidence="3">
    <location>
        <begin position="1"/>
        <end position="86"/>
    </location>
</feature>
<feature type="domain" description="Tyr recombinase" evidence="2">
    <location>
        <begin position="107"/>
        <end position="294"/>
    </location>
</feature>
<feature type="active site" evidence="1">
    <location>
        <position position="151"/>
    </location>
</feature>
<feature type="active site" evidence="1">
    <location>
        <position position="175"/>
    </location>
</feature>
<feature type="active site" evidence="1">
    <location>
        <position position="246"/>
    </location>
</feature>
<feature type="active site" evidence="1">
    <location>
        <position position="249"/>
    </location>
</feature>
<feature type="active site" evidence="1">
    <location>
        <position position="272"/>
    </location>
</feature>
<feature type="active site" description="O-(3'-phospho-DNA)-tyrosine intermediate" evidence="1">
    <location>
        <position position="281"/>
    </location>
</feature>
<keyword id="KW-0131">Cell cycle</keyword>
<keyword id="KW-0132">Cell division</keyword>
<keyword id="KW-0159">Chromosome partition</keyword>
<keyword id="KW-0963">Cytoplasm</keyword>
<keyword id="KW-0229">DNA integration</keyword>
<keyword id="KW-0233">DNA recombination</keyword>
<keyword id="KW-0238">DNA-binding</keyword>
<proteinExistence type="inferred from homology"/>
<dbReference type="EMBL" id="CP000518">
    <property type="protein sequence ID" value="ABL91235.1"/>
    <property type="molecule type" value="Genomic_DNA"/>
</dbReference>
<dbReference type="SMR" id="A1UEH7"/>
<dbReference type="STRING" id="189918.Mkms_2036"/>
<dbReference type="KEGG" id="mkm:Mkms_2036"/>
<dbReference type="HOGENOM" id="CLU_027562_9_0_11"/>
<dbReference type="OrthoDB" id="9801717at2"/>
<dbReference type="GO" id="GO:0005737">
    <property type="term" value="C:cytoplasm"/>
    <property type="evidence" value="ECO:0007669"/>
    <property type="project" value="UniProtKB-SubCell"/>
</dbReference>
<dbReference type="GO" id="GO:0003677">
    <property type="term" value="F:DNA binding"/>
    <property type="evidence" value="ECO:0007669"/>
    <property type="project" value="UniProtKB-KW"/>
</dbReference>
<dbReference type="GO" id="GO:0009037">
    <property type="term" value="F:tyrosine-based site-specific recombinase activity"/>
    <property type="evidence" value="ECO:0007669"/>
    <property type="project" value="UniProtKB-UniRule"/>
</dbReference>
<dbReference type="GO" id="GO:0051301">
    <property type="term" value="P:cell division"/>
    <property type="evidence" value="ECO:0007669"/>
    <property type="project" value="UniProtKB-KW"/>
</dbReference>
<dbReference type="GO" id="GO:0007059">
    <property type="term" value="P:chromosome segregation"/>
    <property type="evidence" value="ECO:0007669"/>
    <property type="project" value="UniProtKB-UniRule"/>
</dbReference>
<dbReference type="GO" id="GO:0006313">
    <property type="term" value="P:DNA transposition"/>
    <property type="evidence" value="ECO:0007669"/>
    <property type="project" value="UniProtKB-UniRule"/>
</dbReference>
<dbReference type="CDD" id="cd00798">
    <property type="entry name" value="INT_XerDC_C"/>
    <property type="match status" value="1"/>
</dbReference>
<dbReference type="Gene3D" id="1.10.150.130">
    <property type="match status" value="1"/>
</dbReference>
<dbReference type="Gene3D" id="1.10.443.10">
    <property type="entry name" value="Intergrase catalytic core"/>
    <property type="match status" value="1"/>
</dbReference>
<dbReference type="HAMAP" id="MF_01808">
    <property type="entry name" value="Recomb_XerC_XerD"/>
    <property type="match status" value="1"/>
</dbReference>
<dbReference type="InterPro" id="IPR044068">
    <property type="entry name" value="CB"/>
</dbReference>
<dbReference type="InterPro" id="IPR011010">
    <property type="entry name" value="DNA_brk_join_enz"/>
</dbReference>
<dbReference type="InterPro" id="IPR013762">
    <property type="entry name" value="Integrase-like_cat_sf"/>
</dbReference>
<dbReference type="InterPro" id="IPR002104">
    <property type="entry name" value="Integrase_catalytic"/>
</dbReference>
<dbReference type="InterPro" id="IPR010998">
    <property type="entry name" value="Integrase_recombinase_N"/>
</dbReference>
<dbReference type="InterPro" id="IPR004107">
    <property type="entry name" value="Integrase_SAM-like_N"/>
</dbReference>
<dbReference type="InterPro" id="IPR023009">
    <property type="entry name" value="Tyrosine_recombinase_XerC/XerD"/>
</dbReference>
<dbReference type="InterPro" id="IPR050090">
    <property type="entry name" value="Tyrosine_recombinase_XerCD"/>
</dbReference>
<dbReference type="NCBIfam" id="NF001399">
    <property type="entry name" value="PRK00283.1"/>
    <property type="match status" value="1"/>
</dbReference>
<dbReference type="PANTHER" id="PTHR30349">
    <property type="entry name" value="PHAGE INTEGRASE-RELATED"/>
    <property type="match status" value="1"/>
</dbReference>
<dbReference type="PANTHER" id="PTHR30349:SF77">
    <property type="entry name" value="TYROSINE RECOMBINASE XERC"/>
    <property type="match status" value="1"/>
</dbReference>
<dbReference type="Pfam" id="PF02899">
    <property type="entry name" value="Phage_int_SAM_1"/>
    <property type="match status" value="1"/>
</dbReference>
<dbReference type="Pfam" id="PF00589">
    <property type="entry name" value="Phage_integrase"/>
    <property type="match status" value="1"/>
</dbReference>
<dbReference type="SUPFAM" id="SSF56349">
    <property type="entry name" value="DNA breaking-rejoining enzymes"/>
    <property type="match status" value="1"/>
</dbReference>
<dbReference type="PROSITE" id="PS51900">
    <property type="entry name" value="CB"/>
    <property type="match status" value="1"/>
</dbReference>
<dbReference type="PROSITE" id="PS51898">
    <property type="entry name" value="TYR_RECOMBINASE"/>
    <property type="match status" value="1"/>
</dbReference>
<evidence type="ECO:0000255" key="1">
    <source>
        <dbReference type="HAMAP-Rule" id="MF_01808"/>
    </source>
</evidence>
<evidence type="ECO:0000255" key="2">
    <source>
        <dbReference type="PROSITE-ProRule" id="PRU01246"/>
    </source>
</evidence>
<evidence type="ECO:0000255" key="3">
    <source>
        <dbReference type="PROSITE-ProRule" id="PRU01248"/>
    </source>
</evidence>
<accession>A1UEH7</accession>
<organism>
    <name type="scientific">Mycobacterium sp. (strain KMS)</name>
    <dbReference type="NCBI Taxonomy" id="189918"/>
    <lineage>
        <taxon>Bacteria</taxon>
        <taxon>Bacillati</taxon>
        <taxon>Actinomycetota</taxon>
        <taxon>Actinomycetes</taxon>
        <taxon>Mycobacteriales</taxon>
        <taxon>Mycobacteriaceae</taxon>
        <taxon>Mycobacterium</taxon>
    </lineage>
</organism>
<name>XERC_MYCSK</name>
<comment type="function">
    <text evidence="1">Site-specific tyrosine recombinase, which acts by catalyzing the cutting and rejoining of the recombining DNA molecules. The XerC-XerD complex is essential to convert dimers of the bacterial chromosome into monomers to permit their segregation at cell division. It also contributes to the segregational stability of plasmids.</text>
</comment>
<comment type="subunit">
    <text evidence="1">Forms a cyclic heterotetrameric complex composed of two molecules of XerC and two molecules of XerD.</text>
</comment>
<comment type="subcellular location">
    <subcellularLocation>
        <location evidence="1">Cytoplasm</location>
    </subcellularLocation>
</comment>
<comment type="similarity">
    <text evidence="1">Belongs to the 'phage' integrase family. XerC subfamily.</text>
</comment>
<sequence>MESVLDAFDQYLALERGRSDHTRRAYLGDLRSLFAFCNERTPGADLGSLTLPVLRAWLSAQAAAGTARTTLARRTSAVKTFTAWAVRRGLMASDPATRLQMPKARRTLPAVLRQDQARDALDAANSGAQQGDPLALRDRLIVEMLYATGIRVSELCGLDIDDVDTSRRLLRVLGKGDKQRTVPFGEPAEQALRAWLTSGRPALATAESGPALLLGARGRRLDPRQARTVVHETVGAVAGAPDIGPHGLRHSAATHLLEGGADLRIVQELLGHSTLATTQLYTHVTVARLRAVHDQAHPRA</sequence>